<proteinExistence type="inferred from homology"/>
<dbReference type="EC" id="1.14.14.3" evidence="2"/>
<dbReference type="EMBL" id="M36597">
    <property type="protein sequence ID" value="AAA91213.1"/>
    <property type="molecule type" value="Genomic_DNA"/>
</dbReference>
<dbReference type="SMR" id="P18299"/>
<dbReference type="GO" id="GO:0005829">
    <property type="term" value="C:cytosol"/>
    <property type="evidence" value="ECO:0007669"/>
    <property type="project" value="TreeGrafter"/>
</dbReference>
<dbReference type="GO" id="GO:0047646">
    <property type="term" value="F:alkanal monooxygenase (FMN-linked) activity"/>
    <property type="evidence" value="ECO:0007669"/>
    <property type="project" value="UniProtKB-EC"/>
</dbReference>
<dbReference type="GO" id="GO:0008218">
    <property type="term" value="P:bioluminescence"/>
    <property type="evidence" value="ECO:0007669"/>
    <property type="project" value="UniProtKB-KW"/>
</dbReference>
<dbReference type="CDD" id="cd01096">
    <property type="entry name" value="Alkanal_monooxygenase"/>
    <property type="match status" value="1"/>
</dbReference>
<dbReference type="Gene3D" id="3.20.20.30">
    <property type="entry name" value="Luciferase-like domain"/>
    <property type="match status" value="1"/>
</dbReference>
<dbReference type="InterPro" id="IPR033924">
    <property type="entry name" value="Alkanal_monooxygenase"/>
</dbReference>
<dbReference type="InterPro" id="IPR050766">
    <property type="entry name" value="Bact_Lucif_Oxidored"/>
</dbReference>
<dbReference type="InterPro" id="IPR018235">
    <property type="entry name" value="Bacterial_luciferase_CS"/>
</dbReference>
<dbReference type="InterPro" id="IPR011251">
    <property type="entry name" value="Luciferase-like_dom"/>
</dbReference>
<dbReference type="InterPro" id="IPR036661">
    <property type="entry name" value="Luciferase-like_sf"/>
</dbReference>
<dbReference type="InterPro" id="IPR002103">
    <property type="entry name" value="Luciferase_bac/NFP"/>
</dbReference>
<dbReference type="PANTHER" id="PTHR30137:SF8">
    <property type="entry name" value="BLR5498 PROTEIN"/>
    <property type="match status" value="1"/>
</dbReference>
<dbReference type="PANTHER" id="PTHR30137">
    <property type="entry name" value="LUCIFERASE-LIKE MONOOXYGENASE"/>
    <property type="match status" value="1"/>
</dbReference>
<dbReference type="Pfam" id="PF00296">
    <property type="entry name" value="Bac_luciferase"/>
    <property type="match status" value="1"/>
</dbReference>
<dbReference type="PRINTS" id="PR00089">
    <property type="entry name" value="LUCIFERASE"/>
</dbReference>
<dbReference type="SUPFAM" id="SSF51679">
    <property type="entry name" value="Bacterial luciferase-like"/>
    <property type="match status" value="1"/>
</dbReference>
<dbReference type="PROSITE" id="PS00494">
    <property type="entry name" value="BACTERIAL_LUCIFERASE"/>
    <property type="match status" value="1"/>
</dbReference>
<accession>P18299</accession>
<reference key="1">
    <citation type="journal article" date="1990" name="Arch. Microbiol.">
        <title>Relationship of the luminous bacterial symbiont of the Caribbean flashlight fish, Kryptophanaron alfredi (family Anomalopidae) to other luminous bacteria based on bacterial luciferase (luxA) genes.</title>
        <authorList>
            <person name="Haygood M.G."/>
        </authorList>
    </citation>
    <scope>NUCLEOTIDE SEQUENCE [GENOMIC DNA]</scope>
</reference>
<sequence length="357" mass="40386">MKFGNFLLTYQPPQLDQKEVIKRLVNLGQASESCGFDTAWLLEHHFTEFGLLGNPYVAAANLLGATKKLHVGTAAVVLPTAHPVRQLEDVNLLDQMSKGRFKFGICRGLYDKDFRVFGTDMSNSRELMNSWYDIMTKGMIEGHVSSDNEHIKFPKVKVSPNSYTQRGAPVYVVAESASTTEWAAERGLPIILSWIINNNEKKSQLDLYNEIALEHGHDVSNIDHCMSYITSVDHNSNKAKDICRDFLAHWYDSYLNATSIFDDSNQTKGYDFNKGQWRNFVLKGHKDTNRRIDYSYEINPVGTPQECIEIIQSDIDATGIHNICCGFEANGSETEIIASMKLFQSDVMPYLKEKSNC</sequence>
<keyword id="KW-0285">Flavoprotein</keyword>
<keyword id="KW-0288">FMN</keyword>
<keyword id="KW-0455">Luminescence</keyword>
<keyword id="KW-0503">Monooxygenase</keyword>
<keyword id="KW-0560">Oxidoreductase</keyword>
<keyword id="KW-0599">Photoprotein</keyword>
<feature type="chain" id="PRO_0000220163" description="Alkanal monooxygenase alpha chain">
    <location>
        <begin position="1"/>
        <end position="357"/>
    </location>
</feature>
<organism>
    <name type="scientific">Kryptophanaron alfredi symbiont</name>
    <dbReference type="NCBI Taxonomy" id="28177"/>
    <lineage>
        <taxon>Bacteria</taxon>
        <taxon>Pseudomonadati</taxon>
        <taxon>Pseudomonadota</taxon>
        <taxon>Gammaproteobacteria</taxon>
        <taxon>Vibrionales</taxon>
        <taxon>Vibrionaceae</taxon>
    </lineage>
</organism>
<evidence type="ECO:0000250" key="1">
    <source>
        <dbReference type="UniProtKB" id="P07740"/>
    </source>
</evidence>
<evidence type="ECO:0000250" key="2">
    <source>
        <dbReference type="UniProtKB" id="P19839"/>
    </source>
</evidence>
<evidence type="ECO:0000305" key="3"/>
<gene>
    <name type="primary">luxA</name>
</gene>
<comment type="function">
    <text evidence="2">Light-emitting reaction in luminous bacteria.</text>
</comment>
<comment type="catalytic activity">
    <reaction evidence="2">
        <text>a long-chain fatty aldehyde + FMNH2 + O2 = a long-chain fatty acid + hnu + FMN + H2O + 2 H(+)</text>
        <dbReference type="Rhea" id="RHEA:17181"/>
        <dbReference type="ChEBI" id="CHEBI:15377"/>
        <dbReference type="ChEBI" id="CHEBI:15378"/>
        <dbReference type="ChEBI" id="CHEBI:15379"/>
        <dbReference type="ChEBI" id="CHEBI:17176"/>
        <dbReference type="ChEBI" id="CHEBI:30212"/>
        <dbReference type="ChEBI" id="CHEBI:57560"/>
        <dbReference type="ChEBI" id="CHEBI:57618"/>
        <dbReference type="ChEBI" id="CHEBI:58210"/>
        <dbReference type="EC" id="1.14.14.3"/>
    </reaction>
</comment>
<comment type="subunit">
    <text evidence="1">Heterodimer of an alpha and a beta chain.</text>
</comment>
<comment type="similarity">
    <text evidence="3">Belongs to the bacterial luciferase oxidoreductase family.</text>
</comment>
<name>LUXA_KRYAS</name>
<protein>
    <recommendedName>
        <fullName>Alkanal monooxygenase alpha chain</fullName>
        <ecNumber evidence="2">1.14.14.3</ecNumber>
    </recommendedName>
    <alternativeName>
        <fullName>Bacterial luciferase alpha chain</fullName>
    </alternativeName>
</protein>